<feature type="chain" id="PRO_0000177194" description="Large ribosomal subunit protein bL20">
    <location>
        <begin position="1"/>
        <end position="119"/>
    </location>
</feature>
<accession>Q82VV4</accession>
<protein>
    <recommendedName>
        <fullName evidence="1">Large ribosomal subunit protein bL20</fullName>
    </recommendedName>
    <alternativeName>
        <fullName evidence="2">50S ribosomal protein L20</fullName>
    </alternativeName>
</protein>
<comment type="function">
    <text evidence="1">Binds directly to 23S ribosomal RNA and is necessary for the in vitro assembly process of the 50S ribosomal subunit. It is not involved in the protein synthesizing functions of that subunit.</text>
</comment>
<comment type="similarity">
    <text evidence="1">Belongs to the bacterial ribosomal protein bL20 family.</text>
</comment>
<sequence length="119" mass="13724">MPRVKRGVTAKARHKKILKLAKGYRGRRKNVYRIAKQAVMKAGQYAYRDRRQRKRQFRTLWIARINAAARELGMTYSTFMNGIRKAGISLDRKILADLAVFDKVAFEKITNQVKAGLAN</sequence>
<proteinExistence type="inferred from homology"/>
<name>RL20_NITEU</name>
<evidence type="ECO:0000255" key="1">
    <source>
        <dbReference type="HAMAP-Rule" id="MF_00382"/>
    </source>
</evidence>
<evidence type="ECO:0000305" key="2"/>
<keyword id="KW-1185">Reference proteome</keyword>
<keyword id="KW-0687">Ribonucleoprotein</keyword>
<keyword id="KW-0689">Ribosomal protein</keyword>
<keyword id="KW-0694">RNA-binding</keyword>
<keyword id="KW-0699">rRNA-binding</keyword>
<dbReference type="EMBL" id="AL954747">
    <property type="protein sequence ID" value="CAD84866.1"/>
    <property type="molecule type" value="Genomic_DNA"/>
</dbReference>
<dbReference type="RefSeq" id="WP_011111564.1">
    <property type="nucleotide sequence ID" value="NC_004757.1"/>
</dbReference>
<dbReference type="SMR" id="Q82VV4"/>
<dbReference type="STRING" id="228410.NE0955"/>
<dbReference type="GeneID" id="87104147"/>
<dbReference type="KEGG" id="neu:NE0955"/>
<dbReference type="eggNOG" id="COG0292">
    <property type="taxonomic scope" value="Bacteria"/>
</dbReference>
<dbReference type="HOGENOM" id="CLU_123265_0_1_4"/>
<dbReference type="OrthoDB" id="9808966at2"/>
<dbReference type="PhylomeDB" id="Q82VV4"/>
<dbReference type="Proteomes" id="UP000001416">
    <property type="component" value="Chromosome"/>
</dbReference>
<dbReference type="GO" id="GO:1990904">
    <property type="term" value="C:ribonucleoprotein complex"/>
    <property type="evidence" value="ECO:0007669"/>
    <property type="project" value="UniProtKB-KW"/>
</dbReference>
<dbReference type="GO" id="GO:0005840">
    <property type="term" value="C:ribosome"/>
    <property type="evidence" value="ECO:0007669"/>
    <property type="project" value="UniProtKB-KW"/>
</dbReference>
<dbReference type="GO" id="GO:0019843">
    <property type="term" value="F:rRNA binding"/>
    <property type="evidence" value="ECO:0007669"/>
    <property type="project" value="UniProtKB-UniRule"/>
</dbReference>
<dbReference type="GO" id="GO:0003735">
    <property type="term" value="F:structural constituent of ribosome"/>
    <property type="evidence" value="ECO:0007669"/>
    <property type="project" value="InterPro"/>
</dbReference>
<dbReference type="GO" id="GO:0000027">
    <property type="term" value="P:ribosomal large subunit assembly"/>
    <property type="evidence" value="ECO:0007669"/>
    <property type="project" value="UniProtKB-UniRule"/>
</dbReference>
<dbReference type="GO" id="GO:0006412">
    <property type="term" value="P:translation"/>
    <property type="evidence" value="ECO:0007669"/>
    <property type="project" value="InterPro"/>
</dbReference>
<dbReference type="CDD" id="cd07026">
    <property type="entry name" value="Ribosomal_L20"/>
    <property type="match status" value="1"/>
</dbReference>
<dbReference type="FunFam" id="1.10.1900.20:FF:000001">
    <property type="entry name" value="50S ribosomal protein L20"/>
    <property type="match status" value="1"/>
</dbReference>
<dbReference type="Gene3D" id="6.10.160.10">
    <property type="match status" value="1"/>
</dbReference>
<dbReference type="Gene3D" id="1.10.1900.20">
    <property type="entry name" value="Ribosomal protein L20"/>
    <property type="match status" value="1"/>
</dbReference>
<dbReference type="HAMAP" id="MF_00382">
    <property type="entry name" value="Ribosomal_bL20"/>
    <property type="match status" value="1"/>
</dbReference>
<dbReference type="InterPro" id="IPR005813">
    <property type="entry name" value="Ribosomal_bL20"/>
</dbReference>
<dbReference type="InterPro" id="IPR049946">
    <property type="entry name" value="RIBOSOMAL_L20_CS"/>
</dbReference>
<dbReference type="InterPro" id="IPR035566">
    <property type="entry name" value="Ribosomal_protein_bL20_C"/>
</dbReference>
<dbReference type="NCBIfam" id="TIGR01032">
    <property type="entry name" value="rplT_bact"/>
    <property type="match status" value="1"/>
</dbReference>
<dbReference type="PANTHER" id="PTHR10986">
    <property type="entry name" value="39S RIBOSOMAL PROTEIN L20"/>
    <property type="match status" value="1"/>
</dbReference>
<dbReference type="Pfam" id="PF00453">
    <property type="entry name" value="Ribosomal_L20"/>
    <property type="match status" value="1"/>
</dbReference>
<dbReference type="PRINTS" id="PR00062">
    <property type="entry name" value="RIBOSOMALL20"/>
</dbReference>
<dbReference type="SUPFAM" id="SSF74731">
    <property type="entry name" value="Ribosomal protein L20"/>
    <property type="match status" value="1"/>
</dbReference>
<dbReference type="PROSITE" id="PS00937">
    <property type="entry name" value="RIBOSOMAL_L20"/>
    <property type="match status" value="1"/>
</dbReference>
<organism>
    <name type="scientific">Nitrosomonas europaea (strain ATCC 19718 / CIP 103999 / KCTC 2705 / NBRC 14298)</name>
    <dbReference type="NCBI Taxonomy" id="228410"/>
    <lineage>
        <taxon>Bacteria</taxon>
        <taxon>Pseudomonadati</taxon>
        <taxon>Pseudomonadota</taxon>
        <taxon>Betaproteobacteria</taxon>
        <taxon>Nitrosomonadales</taxon>
        <taxon>Nitrosomonadaceae</taxon>
        <taxon>Nitrosomonas</taxon>
    </lineage>
</organism>
<reference key="1">
    <citation type="journal article" date="2003" name="J. Bacteriol.">
        <title>Complete genome sequence of the ammonia-oxidizing bacterium and obligate chemolithoautotroph Nitrosomonas europaea.</title>
        <authorList>
            <person name="Chain P."/>
            <person name="Lamerdin J.E."/>
            <person name="Larimer F.W."/>
            <person name="Regala W."/>
            <person name="Lao V."/>
            <person name="Land M.L."/>
            <person name="Hauser L."/>
            <person name="Hooper A.B."/>
            <person name="Klotz M.G."/>
            <person name="Norton J."/>
            <person name="Sayavedra-Soto L.A."/>
            <person name="Arciero D.M."/>
            <person name="Hommes N.G."/>
            <person name="Whittaker M.M."/>
            <person name="Arp D.J."/>
        </authorList>
    </citation>
    <scope>NUCLEOTIDE SEQUENCE [LARGE SCALE GENOMIC DNA]</scope>
    <source>
        <strain>ATCC 19718 / CIP 103999 / KCTC 2705 / NBRC 14298</strain>
    </source>
</reference>
<gene>
    <name evidence="1" type="primary">rplT</name>
    <name type="ordered locus">NE0955</name>
</gene>